<organism>
    <name type="scientific">Shewanella baltica (strain OS155 / ATCC BAA-1091)</name>
    <dbReference type="NCBI Taxonomy" id="325240"/>
    <lineage>
        <taxon>Bacteria</taxon>
        <taxon>Pseudomonadati</taxon>
        <taxon>Pseudomonadota</taxon>
        <taxon>Gammaproteobacteria</taxon>
        <taxon>Alteromonadales</taxon>
        <taxon>Shewanellaceae</taxon>
        <taxon>Shewanella</taxon>
    </lineage>
</organism>
<proteinExistence type="inferred from homology"/>
<accession>A3D8W9</accession>
<evidence type="ECO:0000255" key="1">
    <source>
        <dbReference type="HAMAP-Rule" id="MF_00600"/>
    </source>
</evidence>
<dbReference type="EC" id="5.6.1.7" evidence="1"/>
<dbReference type="EMBL" id="CP000563">
    <property type="protein sequence ID" value="ABN63182.1"/>
    <property type="molecule type" value="Genomic_DNA"/>
</dbReference>
<dbReference type="RefSeq" id="WP_011847850.1">
    <property type="nucleotide sequence ID" value="NC_009052.1"/>
</dbReference>
<dbReference type="SMR" id="A3D8W9"/>
<dbReference type="STRING" id="325240.Sbal_3708"/>
<dbReference type="KEGG" id="sbl:Sbal_3708"/>
<dbReference type="HOGENOM" id="CLU_016503_3_0_6"/>
<dbReference type="OrthoDB" id="9766614at2"/>
<dbReference type="Proteomes" id="UP000001557">
    <property type="component" value="Chromosome"/>
</dbReference>
<dbReference type="GO" id="GO:0005737">
    <property type="term" value="C:cytoplasm"/>
    <property type="evidence" value="ECO:0007669"/>
    <property type="project" value="UniProtKB-SubCell"/>
</dbReference>
<dbReference type="GO" id="GO:0005524">
    <property type="term" value="F:ATP binding"/>
    <property type="evidence" value="ECO:0007669"/>
    <property type="project" value="UniProtKB-UniRule"/>
</dbReference>
<dbReference type="GO" id="GO:0140662">
    <property type="term" value="F:ATP-dependent protein folding chaperone"/>
    <property type="evidence" value="ECO:0007669"/>
    <property type="project" value="InterPro"/>
</dbReference>
<dbReference type="GO" id="GO:0016853">
    <property type="term" value="F:isomerase activity"/>
    <property type="evidence" value="ECO:0007669"/>
    <property type="project" value="UniProtKB-KW"/>
</dbReference>
<dbReference type="GO" id="GO:0051082">
    <property type="term" value="F:unfolded protein binding"/>
    <property type="evidence" value="ECO:0007669"/>
    <property type="project" value="UniProtKB-UniRule"/>
</dbReference>
<dbReference type="GO" id="GO:0042026">
    <property type="term" value="P:protein refolding"/>
    <property type="evidence" value="ECO:0007669"/>
    <property type="project" value="UniProtKB-UniRule"/>
</dbReference>
<dbReference type="CDD" id="cd03344">
    <property type="entry name" value="GroEL"/>
    <property type="match status" value="1"/>
</dbReference>
<dbReference type="FunFam" id="1.10.560.10:FF:000001">
    <property type="entry name" value="60 kDa chaperonin"/>
    <property type="match status" value="1"/>
</dbReference>
<dbReference type="FunFam" id="3.50.7.10:FF:000001">
    <property type="entry name" value="60 kDa chaperonin"/>
    <property type="match status" value="1"/>
</dbReference>
<dbReference type="Gene3D" id="3.50.7.10">
    <property type="entry name" value="GroEL"/>
    <property type="match status" value="1"/>
</dbReference>
<dbReference type="Gene3D" id="1.10.560.10">
    <property type="entry name" value="GroEL-like equatorial domain"/>
    <property type="match status" value="1"/>
</dbReference>
<dbReference type="Gene3D" id="3.30.260.10">
    <property type="entry name" value="TCP-1-like chaperonin intermediate domain"/>
    <property type="match status" value="1"/>
</dbReference>
<dbReference type="HAMAP" id="MF_00600">
    <property type="entry name" value="CH60"/>
    <property type="match status" value="1"/>
</dbReference>
<dbReference type="InterPro" id="IPR018370">
    <property type="entry name" value="Chaperonin_Cpn60_CS"/>
</dbReference>
<dbReference type="InterPro" id="IPR001844">
    <property type="entry name" value="Cpn60/GroEL"/>
</dbReference>
<dbReference type="InterPro" id="IPR002423">
    <property type="entry name" value="Cpn60/GroEL/TCP-1"/>
</dbReference>
<dbReference type="InterPro" id="IPR027409">
    <property type="entry name" value="GroEL-like_apical_dom_sf"/>
</dbReference>
<dbReference type="InterPro" id="IPR027413">
    <property type="entry name" value="GROEL-like_equatorial_sf"/>
</dbReference>
<dbReference type="InterPro" id="IPR027410">
    <property type="entry name" value="TCP-1-like_intermed_sf"/>
</dbReference>
<dbReference type="NCBIfam" id="TIGR02348">
    <property type="entry name" value="GroEL"/>
    <property type="match status" value="1"/>
</dbReference>
<dbReference type="NCBIfam" id="NF000592">
    <property type="entry name" value="PRK00013.1"/>
    <property type="match status" value="1"/>
</dbReference>
<dbReference type="NCBIfam" id="NF009487">
    <property type="entry name" value="PRK12849.1"/>
    <property type="match status" value="1"/>
</dbReference>
<dbReference type="NCBIfam" id="NF009488">
    <property type="entry name" value="PRK12850.1"/>
    <property type="match status" value="1"/>
</dbReference>
<dbReference type="NCBIfam" id="NF009489">
    <property type="entry name" value="PRK12851.1"/>
    <property type="match status" value="1"/>
</dbReference>
<dbReference type="PANTHER" id="PTHR45633">
    <property type="entry name" value="60 KDA HEAT SHOCK PROTEIN, MITOCHONDRIAL"/>
    <property type="match status" value="1"/>
</dbReference>
<dbReference type="Pfam" id="PF00118">
    <property type="entry name" value="Cpn60_TCP1"/>
    <property type="match status" value="1"/>
</dbReference>
<dbReference type="PRINTS" id="PR00298">
    <property type="entry name" value="CHAPERONIN60"/>
</dbReference>
<dbReference type="SUPFAM" id="SSF52029">
    <property type="entry name" value="GroEL apical domain-like"/>
    <property type="match status" value="1"/>
</dbReference>
<dbReference type="SUPFAM" id="SSF48592">
    <property type="entry name" value="GroEL equatorial domain-like"/>
    <property type="match status" value="2"/>
</dbReference>
<dbReference type="PROSITE" id="PS00296">
    <property type="entry name" value="CHAPERONINS_CPN60"/>
    <property type="match status" value="1"/>
</dbReference>
<comment type="function">
    <text evidence="1">Together with its co-chaperonin GroES, plays an essential role in assisting protein folding. The GroEL-GroES system forms a nano-cage that allows encapsulation of the non-native substrate proteins and provides a physical environment optimized to promote and accelerate protein folding.</text>
</comment>
<comment type="catalytic activity">
    <reaction evidence="1">
        <text>ATP + H2O + a folded polypeptide = ADP + phosphate + an unfolded polypeptide.</text>
        <dbReference type="EC" id="5.6.1.7"/>
    </reaction>
</comment>
<comment type="subunit">
    <text evidence="1">Forms a cylinder of 14 subunits composed of two heptameric rings stacked back-to-back. Interacts with the co-chaperonin GroES.</text>
</comment>
<comment type="subcellular location">
    <subcellularLocation>
        <location evidence="1">Cytoplasm</location>
    </subcellularLocation>
</comment>
<comment type="similarity">
    <text evidence="1">Belongs to the chaperonin (HSP60) family.</text>
</comment>
<feature type="chain" id="PRO_0000332074" description="Chaperonin GroEL">
    <location>
        <begin position="1"/>
        <end position="545"/>
    </location>
</feature>
<feature type="binding site" evidence="1">
    <location>
        <begin position="30"/>
        <end position="33"/>
    </location>
    <ligand>
        <name>ATP</name>
        <dbReference type="ChEBI" id="CHEBI:30616"/>
    </ligand>
</feature>
<feature type="binding site" evidence="1">
    <location>
        <position position="51"/>
    </location>
    <ligand>
        <name>ATP</name>
        <dbReference type="ChEBI" id="CHEBI:30616"/>
    </ligand>
</feature>
<feature type="binding site" evidence="1">
    <location>
        <begin position="87"/>
        <end position="91"/>
    </location>
    <ligand>
        <name>ATP</name>
        <dbReference type="ChEBI" id="CHEBI:30616"/>
    </ligand>
</feature>
<feature type="binding site" evidence="1">
    <location>
        <position position="415"/>
    </location>
    <ligand>
        <name>ATP</name>
        <dbReference type="ChEBI" id="CHEBI:30616"/>
    </ligand>
</feature>
<feature type="binding site" evidence="1">
    <location>
        <position position="495"/>
    </location>
    <ligand>
        <name>ATP</name>
        <dbReference type="ChEBI" id="CHEBI:30616"/>
    </ligand>
</feature>
<keyword id="KW-0067">ATP-binding</keyword>
<keyword id="KW-0143">Chaperone</keyword>
<keyword id="KW-0963">Cytoplasm</keyword>
<keyword id="KW-0413">Isomerase</keyword>
<keyword id="KW-0547">Nucleotide-binding</keyword>
<keyword id="KW-1185">Reference proteome</keyword>
<reference key="1">
    <citation type="submission" date="2007-02" db="EMBL/GenBank/DDBJ databases">
        <title>Complete sequence of chromosome of Shewanella baltica OS155.</title>
        <authorList>
            <consortium name="US DOE Joint Genome Institute"/>
            <person name="Copeland A."/>
            <person name="Lucas S."/>
            <person name="Lapidus A."/>
            <person name="Barry K."/>
            <person name="Detter J.C."/>
            <person name="Glavina del Rio T."/>
            <person name="Hammon N."/>
            <person name="Israni S."/>
            <person name="Dalin E."/>
            <person name="Tice H."/>
            <person name="Pitluck S."/>
            <person name="Sims D.R."/>
            <person name="Brettin T."/>
            <person name="Bruce D."/>
            <person name="Han C."/>
            <person name="Tapia R."/>
            <person name="Brainard J."/>
            <person name="Schmutz J."/>
            <person name="Larimer F."/>
            <person name="Land M."/>
            <person name="Hauser L."/>
            <person name="Kyrpides N."/>
            <person name="Mikhailova N."/>
            <person name="Brettar I."/>
            <person name="Klappenbach J."/>
            <person name="Konstantinidis K."/>
            <person name="Rodrigues J."/>
            <person name="Tiedje J."/>
            <person name="Richardson P."/>
        </authorList>
    </citation>
    <scope>NUCLEOTIDE SEQUENCE [LARGE SCALE GENOMIC DNA]</scope>
    <source>
        <strain>OS155 / ATCC BAA-1091</strain>
    </source>
</reference>
<protein>
    <recommendedName>
        <fullName evidence="1">Chaperonin GroEL</fullName>
        <ecNumber evidence="1">5.6.1.7</ecNumber>
    </recommendedName>
    <alternativeName>
        <fullName evidence="1">60 kDa chaperonin</fullName>
    </alternativeName>
    <alternativeName>
        <fullName evidence="1">Chaperonin-60</fullName>
        <shortName evidence="1">Cpn60</shortName>
    </alternativeName>
</protein>
<gene>
    <name evidence="1" type="primary">groEL</name>
    <name evidence="1" type="synonym">groL</name>
    <name type="ordered locus">Sbal_3708</name>
</gene>
<name>CH60_SHEB5</name>
<sequence>MAAKEVVFGNDARVRMLAGVNILANAVKVTLGPKGRNVVLDKSFGSPLITKDGVSVAKEIELEDKFENMGAQMVKEVASKANDAAGDGTTTATVLAQAIVVEGLKAVAAGMNPMDLKRGIDKAVIAAVAELKALSQPCADSKAIAQVATISANSDESIGEIIATAMEKVGKEGVITVEEGQALENELDVVEGMQFDRGYLSPYFINKPETGSVELDHPFVLLVDKKISNIRELLPILEGLAKTGKPLLIVAEDVEGEALATLVVNNMRGIVKVAAVKAPGFGDRRKAMLQDVAILTGGTVIAEEIGLELEKATLEDLGTAKRVVITKDNTTIIDGNGEQTQIAARVSQIKQQVEESTSDYDKEKLQERMAKLAGGVAVIKVGAATEVEMKEKKARVEDALHATRAAVEEGVVPGGGVALVRVASKIAEVEVLNEDQKHGVVIALRAMEAPLRQIATNAGEEASVVANTVKNGSGNFGYNAGNDTYGDMLEMGILDPTKVTRCALQFAASIAGLMITTEAMVAEIPQNASQDMGGMGGMGGMGGMM</sequence>